<protein>
    <recommendedName>
        <fullName>Histamine N-methyltransferase</fullName>
        <shortName>HMT</shortName>
        <ecNumber evidence="1">2.1.1.8</ecNumber>
    </recommendedName>
</protein>
<name>HNMT_DANRE</name>
<sequence length="292" mass="33619">MAAPFKTLVEDYPRYLKSFELFLERSSEHQCMQDFIHNTLPDILASIGGGRSVFNVMGVGSGAGDIDLEMLAQLHLKHPHVKVDNEVVEPSNDMLYKYKARVSTSPDLAYINFTWNKMTASEFEKQWQEKTPEKKMDFIHMIQMLYYVKDPNATVSFFRSLLEKDGKLLIILVSGESGWGKLWTTFRKQLCYTEMSQCVTIGEIKSFLDSEGVPYRKYVLLSQMDITECFTEGDQEGELLLDFLTEVKEFSKNAPERLKKEVLDVLRHPDCSKEVDGRIIFNNNLEVLVIEP</sequence>
<keyword id="KW-0963">Cytoplasm</keyword>
<keyword id="KW-0489">Methyltransferase</keyword>
<keyword id="KW-1185">Reference proteome</keyword>
<keyword id="KW-0949">S-adenosyl-L-methionine</keyword>
<keyword id="KW-0808">Transferase</keyword>
<evidence type="ECO:0000250" key="1">
    <source>
        <dbReference type="UniProtKB" id="P50135"/>
    </source>
</evidence>
<evidence type="ECO:0000255" key="2">
    <source>
        <dbReference type="PROSITE-ProRule" id="PRU00929"/>
    </source>
</evidence>
<comment type="function">
    <text evidence="1">Inactivates histamine by N-methylation. Plays an important role in degrading histamine and in regulating the airway response to histamine.</text>
</comment>
<comment type="catalytic activity">
    <reaction evidence="1 2">
        <text>histamine + S-adenosyl-L-methionine = N(tau)-methylhistamine + S-adenosyl-L-homocysteine + H(+)</text>
        <dbReference type="Rhea" id="RHEA:19301"/>
        <dbReference type="ChEBI" id="CHEBI:15378"/>
        <dbReference type="ChEBI" id="CHEBI:57856"/>
        <dbReference type="ChEBI" id="CHEBI:58432"/>
        <dbReference type="ChEBI" id="CHEBI:58600"/>
        <dbReference type="ChEBI" id="CHEBI:59789"/>
        <dbReference type="EC" id="2.1.1.8"/>
    </reaction>
</comment>
<comment type="subunit">
    <text evidence="1">Monomer.</text>
</comment>
<comment type="subcellular location">
    <subcellularLocation>
        <location evidence="1">Cytoplasm</location>
    </subcellularLocation>
</comment>
<comment type="similarity">
    <text evidence="2">Belongs to the class I-like SAM-binding methyltransferase superfamily. HNMT family.</text>
</comment>
<proteinExistence type="evidence at transcript level"/>
<reference key="1">
    <citation type="submission" date="2004-07" db="EMBL/GenBank/DDBJ databases">
        <authorList>
            <consortium name="NIH - Zebrafish Gene Collection (ZGC) project"/>
        </authorList>
    </citation>
    <scope>NUCLEOTIDE SEQUENCE [LARGE SCALE MRNA]</scope>
    <source>
        <tissue>Embryo</tissue>
    </source>
</reference>
<accession>Q6DC37</accession>
<dbReference type="EC" id="2.1.1.8" evidence="1"/>
<dbReference type="EMBL" id="BC078250">
    <property type="protein sequence ID" value="AAH78250.1"/>
    <property type="molecule type" value="mRNA"/>
</dbReference>
<dbReference type="RefSeq" id="NP_001003636.1">
    <property type="nucleotide sequence ID" value="NM_001003636.1"/>
</dbReference>
<dbReference type="SMR" id="Q6DC37"/>
<dbReference type="FunCoup" id="Q6DC37">
    <property type="interactions" value="897"/>
</dbReference>
<dbReference type="STRING" id="7955.ENSDARP00000113843"/>
<dbReference type="PaxDb" id="7955-ENSDARP00000113843"/>
<dbReference type="GeneID" id="445242"/>
<dbReference type="KEGG" id="dre:445242"/>
<dbReference type="AGR" id="ZFIN:ZDB-GENE-040801-157"/>
<dbReference type="CTD" id="3176"/>
<dbReference type="ZFIN" id="ZDB-GENE-040801-157">
    <property type="gene designation" value="hnmt"/>
</dbReference>
<dbReference type="eggNOG" id="ENOG502QQJ1">
    <property type="taxonomic scope" value="Eukaryota"/>
</dbReference>
<dbReference type="InParanoid" id="Q6DC37"/>
<dbReference type="OrthoDB" id="5984880at2759"/>
<dbReference type="PhylomeDB" id="Q6DC37"/>
<dbReference type="PRO" id="PR:Q6DC37"/>
<dbReference type="Proteomes" id="UP000000437">
    <property type="component" value="Chromosome 9"/>
</dbReference>
<dbReference type="GO" id="GO:0005737">
    <property type="term" value="C:cytoplasm"/>
    <property type="evidence" value="ECO:0000250"/>
    <property type="project" value="UniProtKB"/>
</dbReference>
<dbReference type="GO" id="GO:0046539">
    <property type="term" value="F:histamine N-methyltransferase activity"/>
    <property type="evidence" value="ECO:0000250"/>
    <property type="project" value="UniProtKB"/>
</dbReference>
<dbReference type="GO" id="GO:0001695">
    <property type="term" value="P:histamine catabolic process"/>
    <property type="evidence" value="ECO:0000250"/>
    <property type="project" value="UniProtKB"/>
</dbReference>
<dbReference type="GO" id="GO:0032259">
    <property type="term" value="P:methylation"/>
    <property type="evidence" value="ECO:0000250"/>
    <property type="project" value="UniProtKB"/>
</dbReference>
<dbReference type="FunFam" id="3.40.50.150:FF:000118">
    <property type="entry name" value="Histamine N-methyltransferase"/>
    <property type="match status" value="1"/>
</dbReference>
<dbReference type="Gene3D" id="3.40.50.150">
    <property type="entry name" value="Vaccinia Virus protein VP39"/>
    <property type="match status" value="1"/>
</dbReference>
<dbReference type="InterPro" id="IPR016673">
    <property type="entry name" value="HHMT-like"/>
</dbReference>
<dbReference type="InterPro" id="IPR029063">
    <property type="entry name" value="SAM-dependent_MTases_sf"/>
</dbReference>
<dbReference type="Pfam" id="PF13489">
    <property type="entry name" value="Methyltransf_23"/>
    <property type="match status" value="1"/>
</dbReference>
<dbReference type="PIRSF" id="PIRSF016616">
    <property type="entry name" value="HHMT"/>
    <property type="match status" value="1"/>
</dbReference>
<dbReference type="SUPFAM" id="SSF53335">
    <property type="entry name" value="S-adenosyl-L-methionine-dependent methyltransferases"/>
    <property type="match status" value="1"/>
</dbReference>
<dbReference type="PROSITE" id="PS51597">
    <property type="entry name" value="SAM_HNMT"/>
    <property type="match status" value="1"/>
</dbReference>
<feature type="chain" id="PRO_0000271424" description="Histamine N-methyltransferase">
    <location>
        <begin position="1"/>
        <end position="292"/>
    </location>
</feature>
<feature type="binding site" evidence="2">
    <location>
        <position position="28"/>
    </location>
    <ligand>
        <name>substrate</name>
    </ligand>
</feature>
<feature type="binding site" evidence="2">
    <location>
        <position position="60"/>
    </location>
    <ligand>
        <name>S-adenosyl-L-methionine</name>
        <dbReference type="ChEBI" id="CHEBI:59789"/>
    </ligand>
</feature>
<feature type="binding site" evidence="2">
    <location>
        <position position="89"/>
    </location>
    <ligand>
        <name>S-adenosyl-L-methionine</name>
        <dbReference type="ChEBI" id="CHEBI:59789"/>
    </ligand>
</feature>
<feature type="binding site" evidence="2">
    <location>
        <position position="142"/>
    </location>
    <ligand>
        <name>S-adenosyl-L-methionine</name>
        <dbReference type="ChEBI" id="CHEBI:59789"/>
    </ligand>
</feature>
<feature type="binding site" evidence="2">
    <location>
        <position position="283"/>
    </location>
    <ligand>
        <name>substrate</name>
    </ligand>
</feature>
<organism>
    <name type="scientific">Danio rerio</name>
    <name type="common">Zebrafish</name>
    <name type="synonym">Brachydanio rerio</name>
    <dbReference type="NCBI Taxonomy" id="7955"/>
    <lineage>
        <taxon>Eukaryota</taxon>
        <taxon>Metazoa</taxon>
        <taxon>Chordata</taxon>
        <taxon>Craniata</taxon>
        <taxon>Vertebrata</taxon>
        <taxon>Euteleostomi</taxon>
        <taxon>Actinopterygii</taxon>
        <taxon>Neopterygii</taxon>
        <taxon>Teleostei</taxon>
        <taxon>Ostariophysi</taxon>
        <taxon>Cypriniformes</taxon>
        <taxon>Danionidae</taxon>
        <taxon>Danioninae</taxon>
        <taxon>Danio</taxon>
    </lineage>
</organism>
<gene>
    <name type="primary">hnmt</name>
    <name type="ORF">zgc:100917</name>
</gene>